<name>YMH6_CAEEL</name>
<accession>P34473</accession>
<organism>
    <name type="scientific">Caenorhabditis elegans</name>
    <dbReference type="NCBI Taxonomy" id="6239"/>
    <lineage>
        <taxon>Eukaryota</taxon>
        <taxon>Metazoa</taxon>
        <taxon>Ecdysozoa</taxon>
        <taxon>Nematoda</taxon>
        <taxon>Chromadorea</taxon>
        <taxon>Rhabditida</taxon>
        <taxon>Rhabditina</taxon>
        <taxon>Rhabditomorpha</taxon>
        <taxon>Rhabditoidea</taxon>
        <taxon>Rhabditidae</taxon>
        <taxon>Peloderinae</taxon>
        <taxon>Caenorhabditis</taxon>
    </lineage>
</organism>
<proteinExistence type="predicted"/>
<feature type="chain" id="PRO_0000065374" description="Uncharacterized protein F58A4.6">
    <location>
        <begin position="1"/>
        <end position="201"/>
    </location>
</feature>
<protein>
    <recommendedName>
        <fullName>Uncharacterized protein F58A4.6</fullName>
    </recommendedName>
</protein>
<sequence>MNSIKHSTEIPSTSTQSLVFEFTNLDDLYGFLNILQCREEYSFAQIRAFYNIPVDKKLLVNIQVKNPAQNLDYAWERRLKHHFRYMLDLEKLMWNLSTLGGAYSAMGDFDANYAKVAAKITAHQINLAKKYGDPVILARCYLYTALAEAQLGNLSHAVNIVRAIYHWAKQNPNTDIVQRCCEGVYQKLRAIHIFGKASSNK</sequence>
<dbReference type="EMBL" id="Z22179">
    <property type="protein sequence ID" value="CAA80163.3"/>
    <property type="molecule type" value="Genomic_DNA"/>
</dbReference>
<dbReference type="PIR" id="S40978">
    <property type="entry name" value="S40978"/>
</dbReference>
<dbReference type="RefSeq" id="NP_499127.3">
    <property type="nucleotide sequence ID" value="NM_066726.6"/>
</dbReference>
<dbReference type="SMR" id="P34473"/>
<dbReference type="FunCoup" id="P34473">
    <property type="interactions" value="833"/>
</dbReference>
<dbReference type="STRING" id="6239.F58A4.6.1"/>
<dbReference type="PaxDb" id="6239-F58A4.6"/>
<dbReference type="EnsemblMetazoa" id="F58A4.6.1">
    <property type="protein sequence ID" value="F58A4.6.1"/>
    <property type="gene ID" value="WBGene00010229"/>
</dbReference>
<dbReference type="GeneID" id="186485"/>
<dbReference type="KEGG" id="cel:CELE_F58A4.6"/>
<dbReference type="UCSC" id="F58A4.6">
    <property type="organism name" value="c. elegans"/>
</dbReference>
<dbReference type="AGR" id="WB:WBGene00010229"/>
<dbReference type="CTD" id="186485"/>
<dbReference type="WormBase" id="F58A4.6">
    <property type="protein sequence ID" value="CE43534"/>
    <property type="gene ID" value="WBGene00010229"/>
</dbReference>
<dbReference type="eggNOG" id="ENOG502S1K4">
    <property type="taxonomic scope" value="Eukaryota"/>
</dbReference>
<dbReference type="GeneTree" id="ENSGT00520000058215"/>
<dbReference type="HOGENOM" id="CLU_1391407_0_0_1"/>
<dbReference type="InParanoid" id="P34473"/>
<dbReference type="OMA" id="YSAMGDF"/>
<dbReference type="OrthoDB" id="121932at2759"/>
<dbReference type="PhylomeDB" id="P34473"/>
<dbReference type="PRO" id="PR:P34473"/>
<dbReference type="Proteomes" id="UP000001940">
    <property type="component" value="Chromosome III"/>
</dbReference>
<dbReference type="Bgee" id="WBGene00010229">
    <property type="expression patterns" value="Expressed in germ line (C elegans) and 4 other cell types or tissues"/>
</dbReference>
<dbReference type="InterPro" id="IPR032072">
    <property type="entry name" value="DUF4807"/>
</dbReference>
<dbReference type="PANTHER" id="PTHR36693">
    <property type="entry name" value="GH02722P"/>
    <property type="match status" value="1"/>
</dbReference>
<dbReference type="PANTHER" id="PTHR36693:SF1">
    <property type="entry name" value="GH02722P"/>
    <property type="match status" value="1"/>
</dbReference>
<dbReference type="Pfam" id="PF16065">
    <property type="entry name" value="DUF4807"/>
    <property type="match status" value="1"/>
</dbReference>
<keyword id="KW-1185">Reference proteome</keyword>
<gene>
    <name type="ORF">F58A4.6</name>
</gene>
<reference key="1">
    <citation type="journal article" date="1994" name="Nature">
        <title>2.2 Mb of contiguous nucleotide sequence from chromosome III of C. elegans.</title>
        <authorList>
            <person name="Wilson R."/>
            <person name="Ainscough R."/>
            <person name="Anderson K."/>
            <person name="Baynes C."/>
            <person name="Berks M."/>
            <person name="Bonfield J."/>
            <person name="Burton J."/>
            <person name="Connell M."/>
            <person name="Copsey T."/>
            <person name="Cooper J."/>
            <person name="Coulson A."/>
            <person name="Craxton M."/>
            <person name="Dear S."/>
            <person name="Du Z."/>
            <person name="Durbin R."/>
            <person name="Favello A."/>
            <person name="Fraser A."/>
            <person name="Fulton L."/>
            <person name="Gardner A."/>
            <person name="Green P."/>
            <person name="Hawkins T."/>
            <person name="Hillier L."/>
            <person name="Jier M."/>
            <person name="Johnston L."/>
            <person name="Jones M."/>
            <person name="Kershaw J."/>
            <person name="Kirsten J."/>
            <person name="Laisster N."/>
            <person name="Latreille P."/>
            <person name="Lightning J."/>
            <person name="Lloyd C."/>
            <person name="Mortimore B."/>
            <person name="O'Callaghan M."/>
            <person name="Parsons J."/>
            <person name="Percy C."/>
            <person name="Rifken L."/>
            <person name="Roopra A."/>
            <person name="Saunders D."/>
            <person name="Shownkeen R."/>
            <person name="Sims M."/>
            <person name="Smaldon N."/>
            <person name="Smith A."/>
            <person name="Smith M."/>
            <person name="Sonnhammer E."/>
            <person name="Staden R."/>
            <person name="Sulston J."/>
            <person name="Thierry-Mieg J."/>
            <person name="Thomas K."/>
            <person name="Vaudin M."/>
            <person name="Vaughan K."/>
            <person name="Waterston R."/>
            <person name="Watson A."/>
            <person name="Weinstock L."/>
            <person name="Wilkinson-Sproat J."/>
            <person name="Wohldman P."/>
        </authorList>
    </citation>
    <scope>NUCLEOTIDE SEQUENCE [LARGE SCALE GENOMIC DNA]</scope>
    <source>
        <strain>Bristol N2</strain>
    </source>
</reference>
<reference key="2">
    <citation type="journal article" date="1998" name="Science">
        <title>Genome sequence of the nematode C. elegans: a platform for investigating biology.</title>
        <authorList>
            <consortium name="The C. elegans sequencing consortium"/>
        </authorList>
    </citation>
    <scope>NUCLEOTIDE SEQUENCE [LARGE SCALE GENOMIC DNA]</scope>
    <source>
        <strain>Bristol N2</strain>
    </source>
</reference>